<sequence length="440" mass="49480">MKLLHLIFLLALTTGISAVLIYIIGVSNLYESNRFTNEDLEALQSLQNGFQKCVSANGLGLQAAMGRDYCKVSINFPKDTVPKWKDPKSGELEGLSYEFDLCEAVATWEQVRNSSTILTKEYIDALPNGWEDYAWRRINKGIQLNRCQNKSLCIEKLSLVLPETPPYFPRQFGRCAVIGNSGDLLKTKFGKEIDTYDTVLRENGAPIQNYKEYVGEKSTFRLLNRGSAKALDKVVELDEKKQEVLLVKTTIHDIMNKMIREVPIKNPVYLMLGASFGSAAKGTGLKALEFALSTCDSVDMYGFTVDPGYKEWTRYFSESRQGHTPLHGRAYYQMMECLGLIKIHSPMRADPNRVVKWVPSRSTIRSARIAAEKLLRRVGAGSADPLASCSIVKKRNKNKRPMVSHLRKPVSDHQKFVRSTSMYPVEHSPGHGQLCITPAD</sequence>
<reference key="1">
    <citation type="journal article" date="2014" name="Plant J.">
        <title>The plant glycosyltransferase clone collection for functional genomics.</title>
        <authorList>
            <person name="Lao J."/>
            <person name="Oikawa A."/>
            <person name="Bromley J.R."/>
            <person name="McInerney P."/>
            <person name="Suttangkakul A."/>
            <person name="Smith-Moritz A.M."/>
            <person name="Plahar H."/>
            <person name="Chiu T.-Y."/>
            <person name="Gonzalez Fernandez-Nino S.M.G."/>
            <person name="Ebert B."/>
            <person name="Yang F."/>
            <person name="Christiansen K.M."/>
            <person name="Hansen S.F."/>
            <person name="Stonebloom S."/>
            <person name="Adams P.D."/>
            <person name="Ronald P.C."/>
            <person name="Hillson N.J."/>
            <person name="Hadi M.Z."/>
            <person name="Vega-Sanchez M.E."/>
            <person name="Loque D."/>
            <person name="Scheller H.V."/>
            <person name="Heazlewood J.L."/>
        </authorList>
    </citation>
    <scope>NUCLEOTIDE SEQUENCE [MRNA]</scope>
    <source>
        <strain>cv. Columbia</strain>
    </source>
</reference>
<reference key="2">
    <citation type="journal article" date="2000" name="Nature">
        <title>Sequence and analysis of chromosome 3 of the plant Arabidopsis thaliana.</title>
        <authorList>
            <person name="Salanoubat M."/>
            <person name="Lemcke K."/>
            <person name="Rieger M."/>
            <person name="Ansorge W."/>
            <person name="Unseld M."/>
            <person name="Fartmann B."/>
            <person name="Valle G."/>
            <person name="Bloecker H."/>
            <person name="Perez-Alonso M."/>
            <person name="Obermaier B."/>
            <person name="Delseny M."/>
            <person name="Boutry M."/>
            <person name="Grivell L.A."/>
            <person name="Mache R."/>
            <person name="Puigdomenech P."/>
            <person name="De Simone V."/>
            <person name="Choisne N."/>
            <person name="Artiguenave F."/>
            <person name="Robert C."/>
            <person name="Brottier P."/>
            <person name="Wincker P."/>
            <person name="Cattolico L."/>
            <person name="Weissenbach J."/>
            <person name="Saurin W."/>
            <person name="Quetier F."/>
            <person name="Schaefer M."/>
            <person name="Mueller-Auer S."/>
            <person name="Gabel C."/>
            <person name="Fuchs M."/>
            <person name="Benes V."/>
            <person name="Wurmbach E."/>
            <person name="Drzonek H."/>
            <person name="Erfle H."/>
            <person name="Jordan N."/>
            <person name="Bangert S."/>
            <person name="Wiedelmann R."/>
            <person name="Kranz H."/>
            <person name="Voss H."/>
            <person name="Holland R."/>
            <person name="Brandt P."/>
            <person name="Nyakatura G."/>
            <person name="Vezzi A."/>
            <person name="D'Angelo M."/>
            <person name="Pallavicini A."/>
            <person name="Toppo S."/>
            <person name="Simionati B."/>
            <person name="Conrad A."/>
            <person name="Hornischer K."/>
            <person name="Kauer G."/>
            <person name="Loehnert T.-H."/>
            <person name="Nordsiek G."/>
            <person name="Reichelt J."/>
            <person name="Scharfe M."/>
            <person name="Schoen O."/>
            <person name="Bargues M."/>
            <person name="Terol J."/>
            <person name="Climent J."/>
            <person name="Navarro P."/>
            <person name="Collado C."/>
            <person name="Perez-Perez A."/>
            <person name="Ottenwaelder B."/>
            <person name="Duchemin D."/>
            <person name="Cooke R."/>
            <person name="Laudie M."/>
            <person name="Berger-Llauro C."/>
            <person name="Purnelle B."/>
            <person name="Masuy D."/>
            <person name="de Haan M."/>
            <person name="Maarse A.C."/>
            <person name="Alcaraz J.-P."/>
            <person name="Cottet A."/>
            <person name="Casacuberta E."/>
            <person name="Monfort A."/>
            <person name="Argiriou A."/>
            <person name="Flores M."/>
            <person name="Liguori R."/>
            <person name="Vitale D."/>
            <person name="Mannhaupt G."/>
            <person name="Haase D."/>
            <person name="Schoof H."/>
            <person name="Rudd S."/>
            <person name="Zaccaria P."/>
            <person name="Mewes H.-W."/>
            <person name="Mayer K.F.X."/>
            <person name="Kaul S."/>
            <person name="Town C.D."/>
            <person name="Koo H.L."/>
            <person name="Tallon L.J."/>
            <person name="Jenkins J."/>
            <person name="Rooney T."/>
            <person name="Rizzo M."/>
            <person name="Walts A."/>
            <person name="Utterback T."/>
            <person name="Fujii C.Y."/>
            <person name="Shea T.P."/>
            <person name="Creasy T.H."/>
            <person name="Haas B."/>
            <person name="Maiti R."/>
            <person name="Wu D."/>
            <person name="Peterson J."/>
            <person name="Van Aken S."/>
            <person name="Pai G."/>
            <person name="Militscher J."/>
            <person name="Sellers P."/>
            <person name="Gill J.E."/>
            <person name="Feldblyum T.V."/>
            <person name="Preuss D."/>
            <person name="Lin X."/>
            <person name="Nierman W.C."/>
            <person name="Salzberg S.L."/>
            <person name="White O."/>
            <person name="Venter J.C."/>
            <person name="Fraser C.M."/>
            <person name="Kaneko T."/>
            <person name="Nakamura Y."/>
            <person name="Sato S."/>
            <person name="Kato T."/>
            <person name="Asamizu E."/>
            <person name="Sasamoto S."/>
            <person name="Kimura T."/>
            <person name="Idesawa K."/>
            <person name="Kawashima K."/>
            <person name="Kishida Y."/>
            <person name="Kiyokawa C."/>
            <person name="Kohara M."/>
            <person name="Matsumoto M."/>
            <person name="Matsuno A."/>
            <person name="Muraki A."/>
            <person name="Nakayama S."/>
            <person name="Nakazaki N."/>
            <person name="Shinpo S."/>
            <person name="Takeuchi C."/>
            <person name="Wada T."/>
            <person name="Watanabe A."/>
            <person name="Yamada M."/>
            <person name="Yasuda M."/>
            <person name="Tabata S."/>
        </authorList>
    </citation>
    <scope>NUCLEOTIDE SEQUENCE [LARGE SCALE GENOMIC DNA]</scope>
    <source>
        <strain>cv. Columbia</strain>
    </source>
</reference>
<reference key="3">
    <citation type="journal article" date="2017" name="Plant J.">
        <title>Araport11: a complete reannotation of the Arabidopsis thaliana reference genome.</title>
        <authorList>
            <person name="Cheng C.Y."/>
            <person name="Krishnakumar V."/>
            <person name="Chan A.P."/>
            <person name="Thibaud-Nissen F."/>
            <person name="Schobel S."/>
            <person name="Town C.D."/>
        </authorList>
    </citation>
    <scope>GENOME REANNOTATION</scope>
    <source>
        <strain>cv. Columbia</strain>
    </source>
</reference>
<reference key="4">
    <citation type="journal article" date="2003" name="Science">
        <title>Empirical analysis of transcriptional activity in the Arabidopsis genome.</title>
        <authorList>
            <person name="Yamada K."/>
            <person name="Lim J."/>
            <person name="Dale J.M."/>
            <person name="Chen H."/>
            <person name="Shinn P."/>
            <person name="Palm C.J."/>
            <person name="Southwick A.M."/>
            <person name="Wu H.C."/>
            <person name="Kim C.J."/>
            <person name="Nguyen M."/>
            <person name="Pham P.K."/>
            <person name="Cheuk R.F."/>
            <person name="Karlin-Newmann G."/>
            <person name="Liu S.X."/>
            <person name="Lam B."/>
            <person name="Sakano H."/>
            <person name="Wu T."/>
            <person name="Yu G."/>
            <person name="Miranda M."/>
            <person name="Quach H.L."/>
            <person name="Tripp M."/>
            <person name="Chang C.H."/>
            <person name="Lee J.M."/>
            <person name="Toriumi M.J."/>
            <person name="Chan M.M."/>
            <person name="Tang C.C."/>
            <person name="Onodera C.S."/>
            <person name="Deng J.M."/>
            <person name="Akiyama K."/>
            <person name="Ansari Y."/>
            <person name="Arakawa T."/>
            <person name="Banh J."/>
            <person name="Banno F."/>
            <person name="Bowser L."/>
            <person name="Brooks S.Y."/>
            <person name="Carninci P."/>
            <person name="Chao Q."/>
            <person name="Choy N."/>
            <person name="Enju A."/>
            <person name="Goldsmith A.D."/>
            <person name="Gurjal M."/>
            <person name="Hansen N.F."/>
            <person name="Hayashizaki Y."/>
            <person name="Johnson-Hopson C."/>
            <person name="Hsuan V.W."/>
            <person name="Iida K."/>
            <person name="Karnes M."/>
            <person name="Khan S."/>
            <person name="Koesema E."/>
            <person name="Ishida J."/>
            <person name="Jiang P.X."/>
            <person name="Jones T."/>
            <person name="Kawai J."/>
            <person name="Kamiya A."/>
            <person name="Meyers C."/>
            <person name="Nakajima M."/>
            <person name="Narusaka M."/>
            <person name="Seki M."/>
            <person name="Sakurai T."/>
            <person name="Satou M."/>
            <person name="Tamse R."/>
            <person name="Vaysberg M."/>
            <person name="Wallender E.K."/>
            <person name="Wong C."/>
            <person name="Yamamura Y."/>
            <person name="Yuan S."/>
            <person name="Shinozaki K."/>
            <person name="Davis R.W."/>
            <person name="Theologis A."/>
            <person name="Ecker J.R."/>
        </authorList>
    </citation>
    <scope>NUCLEOTIDE SEQUENCE [LARGE SCALE MRNA]</scope>
    <source>
        <strain>cv. Columbia</strain>
    </source>
</reference>
<reference key="5">
    <citation type="journal article" date="2009" name="Plant Biol.">
        <title>The Arabidopsis thaliana putative sialyltransferase resides in the Golgi apparatus but lacks the ability to transfer sialic acid.</title>
        <authorList>
            <person name="Daskalova S.M."/>
            <person name="Pah A.R."/>
            <person name="Baluch D.P."/>
            <person name="Lopez L.C."/>
        </authorList>
    </citation>
    <scope>FUNCTION</scope>
    <scope>SUBCELLULAR LOCATION</scope>
</reference>
<reference key="6">
    <citation type="journal article" date="2014" name="Ann. Bot.">
        <title>The cell wall pectic polymer rhamnogalacturonan-II is required for proper pollen tube elongation: implications of a putative sialyltransferase-like protein.</title>
        <authorList>
            <person name="Dumont M."/>
            <person name="Lehner A."/>
            <person name="Bouton S."/>
            <person name="Kiefer-Meyer M.C."/>
            <person name="Voxeur A."/>
            <person name="Pelloux J."/>
            <person name="Lerouge P."/>
            <person name="Mollet J.C."/>
        </authorList>
    </citation>
    <scope>FUNCTION</scope>
    <scope>DISRUPTION PHENOTYPE</scope>
</reference>
<accession>Q8RY00</accession>
<accession>Q9M301</accession>
<gene>
    <name evidence="5" type="primary">SIA2</name>
    <name evidence="7" type="ordered locus">At3g48820</name>
    <name evidence="8" type="ORF">T21J18.90</name>
</gene>
<dbReference type="EC" id="2.4.-.-" evidence="6"/>
<dbReference type="EMBL" id="KJ138796">
    <property type="protein sequence ID" value="AHL38736.1"/>
    <property type="molecule type" value="mRNA"/>
</dbReference>
<dbReference type="EMBL" id="AL132963">
    <property type="protein sequence ID" value="CAB87910.1"/>
    <property type="status" value="ALT_SEQ"/>
    <property type="molecule type" value="Genomic_DNA"/>
</dbReference>
<dbReference type="EMBL" id="CP002686">
    <property type="protein sequence ID" value="AEE78459.1"/>
    <property type="molecule type" value="Genomic_DNA"/>
</dbReference>
<dbReference type="EMBL" id="AY080589">
    <property type="protein sequence ID" value="AAL85966.1"/>
    <property type="molecule type" value="mRNA"/>
</dbReference>
<dbReference type="EMBL" id="AY133816">
    <property type="protein sequence ID" value="AAM91750.1"/>
    <property type="molecule type" value="mRNA"/>
</dbReference>
<dbReference type="PIR" id="T49278">
    <property type="entry name" value="T49278"/>
</dbReference>
<dbReference type="RefSeq" id="NP_190451.2">
    <molecule id="Q8RY00-1"/>
    <property type="nucleotide sequence ID" value="NM_114741.5"/>
</dbReference>
<dbReference type="FunCoup" id="Q8RY00">
    <property type="interactions" value="1807"/>
</dbReference>
<dbReference type="STRING" id="3702.Q8RY00"/>
<dbReference type="CAZy" id="GT29">
    <property type="family name" value="Glycosyltransferase Family 29"/>
</dbReference>
<dbReference type="GlyCosmos" id="Q8RY00">
    <property type="glycosylation" value="2 sites, No reported glycans"/>
</dbReference>
<dbReference type="GlyGen" id="Q8RY00">
    <property type="glycosylation" value="2 sites"/>
</dbReference>
<dbReference type="PaxDb" id="3702-AT3G48820.1"/>
<dbReference type="ProteomicsDB" id="234511">
    <molecule id="Q8RY00-1"/>
</dbReference>
<dbReference type="EnsemblPlants" id="AT3G48820.1">
    <molecule id="Q8RY00-1"/>
    <property type="protein sequence ID" value="AT3G48820.1"/>
    <property type="gene ID" value="AT3G48820"/>
</dbReference>
<dbReference type="GeneID" id="824043"/>
<dbReference type="Gramene" id="AT3G48820.1">
    <molecule id="Q8RY00-1"/>
    <property type="protein sequence ID" value="AT3G48820.1"/>
    <property type="gene ID" value="AT3G48820"/>
</dbReference>
<dbReference type="KEGG" id="ath:AT3G48820"/>
<dbReference type="Araport" id="AT3G48820"/>
<dbReference type="TAIR" id="AT3G48820">
    <property type="gene designation" value="SIA2"/>
</dbReference>
<dbReference type="eggNOG" id="KOG2692">
    <property type="taxonomic scope" value="Eukaryota"/>
</dbReference>
<dbReference type="InParanoid" id="Q8RY00"/>
<dbReference type="PhylomeDB" id="Q8RY00"/>
<dbReference type="PRO" id="PR:Q8RY00"/>
<dbReference type="Proteomes" id="UP000006548">
    <property type="component" value="Chromosome 3"/>
</dbReference>
<dbReference type="ExpressionAtlas" id="Q8RY00">
    <property type="expression patterns" value="baseline and differential"/>
</dbReference>
<dbReference type="GO" id="GO:0005768">
    <property type="term" value="C:endosome"/>
    <property type="evidence" value="ECO:0007005"/>
    <property type="project" value="TAIR"/>
</dbReference>
<dbReference type="GO" id="GO:0005794">
    <property type="term" value="C:Golgi apparatus"/>
    <property type="evidence" value="ECO:0000314"/>
    <property type="project" value="TAIR"/>
</dbReference>
<dbReference type="GO" id="GO:0000139">
    <property type="term" value="C:Golgi membrane"/>
    <property type="evidence" value="ECO:0007669"/>
    <property type="project" value="UniProtKB-SubCell"/>
</dbReference>
<dbReference type="GO" id="GO:0000138">
    <property type="term" value="C:Golgi trans cisterna"/>
    <property type="evidence" value="ECO:0007005"/>
    <property type="project" value="TAIR"/>
</dbReference>
<dbReference type="GO" id="GO:0005802">
    <property type="term" value="C:trans-Golgi network"/>
    <property type="evidence" value="ECO:0007005"/>
    <property type="project" value="TAIR"/>
</dbReference>
<dbReference type="GO" id="GO:0016757">
    <property type="term" value="F:glycosyltransferase activity"/>
    <property type="evidence" value="ECO:0007669"/>
    <property type="project" value="UniProtKB-KW"/>
</dbReference>
<dbReference type="GO" id="GO:0009846">
    <property type="term" value="P:pollen germination"/>
    <property type="evidence" value="ECO:0000315"/>
    <property type="project" value="UniProtKB"/>
</dbReference>
<dbReference type="GO" id="GO:0009860">
    <property type="term" value="P:pollen tube growth"/>
    <property type="evidence" value="ECO:0000315"/>
    <property type="project" value="UniProtKB"/>
</dbReference>
<dbReference type="GO" id="GO:0006486">
    <property type="term" value="P:protein glycosylation"/>
    <property type="evidence" value="ECO:0007669"/>
    <property type="project" value="InterPro"/>
</dbReference>
<dbReference type="CDD" id="cd19952">
    <property type="entry name" value="GT29"/>
    <property type="match status" value="1"/>
</dbReference>
<dbReference type="FunFam" id="3.90.1480.20:FF:000019">
    <property type="entry name" value="Glycosyl transferase family 29 protein"/>
    <property type="match status" value="1"/>
</dbReference>
<dbReference type="Gene3D" id="3.90.1480.20">
    <property type="entry name" value="Glycosyl transferase family 29"/>
    <property type="match status" value="1"/>
</dbReference>
<dbReference type="InterPro" id="IPR001675">
    <property type="entry name" value="Glyco_trans_29"/>
</dbReference>
<dbReference type="InterPro" id="IPR038578">
    <property type="entry name" value="GT29-like_sf"/>
</dbReference>
<dbReference type="PANTHER" id="PTHR47379">
    <property type="entry name" value="SIALYLTRANSFERASE-LIKE PROTEIN 2"/>
    <property type="match status" value="1"/>
</dbReference>
<dbReference type="PANTHER" id="PTHR47379:SF3">
    <property type="entry name" value="SIALYLTRANSFERASE-LIKE PROTEIN 2"/>
    <property type="match status" value="1"/>
</dbReference>
<dbReference type="Pfam" id="PF00777">
    <property type="entry name" value="Glyco_transf_29"/>
    <property type="match status" value="1"/>
</dbReference>
<protein>
    <recommendedName>
        <fullName evidence="5">Sialyltransferase-like protein 2</fullName>
        <ecNumber evidence="6">2.4.-.-</ecNumber>
    </recommendedName>
</protein>
<organism>
    <name type="scientific">Arabidopsis thaliana</name>
    <name type="common">Mouse-ear cress</name>
    <dbReference type="NCBI Taxonomy" id="3702"/>
    <lineage>
        <taxon>Eukaryota</taxon>
        <taxon>Viridiplantae</taxon>
        <taxon>Streptophyta</taxon>
        <taxon>Embryophyta</taxon>
        <taxon>Tracheophyta</taxon>
        <taxon>Spermatophyta</taxon>
        <taxon>Magnoliopsida</taxon>
        <taxon>eudicotyledons</taxon>
        <taxon>Gunneridae</taxon>
        <taxon>Pentapetalae</taxon>
        <taxon>rosids</taxon>
        <taxon>malvids</taxon>
        <taxon>Brassicales</taxon>
        <taxon>Brassicaceae</taxon>
        <taxon>Camelineae</taxon>
        <taxon>Arabidopsis</taxon>
    </lineage>
</organism>
<proteinExistence type="evidence at transcript level"/>
<keyword id="KW-0025">Alternative splicing</keyword>
<keyword id="KW-0325">Glycoprotein</keyword>
<keyword id="KW-0328">Glycosyltransferase</keyword>
<keyword id="KW-0333">Golgi apparatus</keyword>
<keyword id="KW-0472">Membrane</keyword>
<keyword id="KW-1185">Reference proteome</keyword>
<keyword id="KW-0735">Signal-anchor</keyword>
<keyword id="KW-0808">Transferase</keyword>
<keyword id="KW-0812">Transmembrane</keyword>
<keyword id="KW-1133">Transmembrane helix</keyword>
<feature type="chain" id="PRO_0000434310" description="Sialyltransferase-like protein 2">
    <location>
        <begin position="1"/>
        <end position="440"/>
    </location>
</feature>
<feature type="topological domain" description="Cytoplasmic" evidence="6">
    <location>
        <begin position="1"/>
        <end position="5"/>
    </location>
</feature>
<feature type="transmembrane region" description="Helical; Signal-anchor for type II membrane protein" evidence="1">
    <location>
        <begin position="6"/>
        <end position="26"/>
    </location>
</feature>
<feature type="topological domain" description="Lumenal" evidence="6">
    <location>
        <begin position="27"/>
        <end position="440"/>
    </location>
</feature>
<feature type="glycosylation site" description="N-linked (GlcNAc...) asparagine" evidence="2">
    <location>
        <position position="113"/>
    </location>
</feature>
<feature type="glycosylation site" description="N-linked (GlcNAc...) asparagine" evidence="2">
    <location>
        <position position="149"/>
    </location>
</feature>
<comment type="function">
    <text evidence="3 4">May be involved in the transfer of 2-keto-3-deoxy-D-lyxo-heptulosaric acid (Dha) and/or 2-keto-3-deoxy-D-manno-octulosonic acid (Kdo) on the homogalacturonan backbone of rhamnogalacturonan-II. Required for efficient pollen grain germination and pollen tube elongation (PubMed:24825296). Does not possess sialyltransferase activity in vitro (PubMed:19470101).</text>
</comment>
<comment type="subcellular location">
    <subcellularLocation>
        <location evidence="3">Golgi apparatus membrane</location>
        <topology evidence="6">Single-pass type II membrane protein</topology>
    </subcellularLocation>
</comment>
<comment type="alternative products">
    <event type="alternative splicing"/>
    <isoform>
        <id>Q8RY00-1</id>
        <name>1</name>
        <sequence type="displayed"/>
    </isoform>
    <text evidence="6">A number of isoforms are produced. According to EST sequences.</text>
</comment>
<comment type="disruption phenotype">
    <text evidence="4">Male gametophytic lethality when homozygous. May be due to defect in pollen grain germination and pollen tube growth.</text>
</comment>
<comment type="similarity">
    <text evidence="6">Belongs to the glycosyltransferase 29 family.</text>
</comment>
<comment type="sequence caution" evidence="6">
    <conflict type="erroneous gene model prediction">
        <sequence resource="EMBL-CDS" id="CAB87910"/>
    </conflict>
</comment>
<evidence type="ECO:0000255" key="1"/>
<evidence type="ECO:0000255" key="2">
    <source>
        <dbReference type="PROSITE-ProRule" id="PRU00498"/>
    </source>
</evidence>
<evidence type="ECO:0000269" key="3">
    <source>
    </source>
</evidence>
<evidence type="ECO:0000269" key="4">
    <source>
    </source>
</evidence>
<evidence type="ECO:0000303" key="5">
    <source>
    </source>
</evidence>
<evidence type="ECO:0000305" key="6"/>
<evidence type="ECO:0000312" key="7">
    <source>
        <dbReference type="Araport" id="AT3G48820"/>
    </source>
</evidence>
<evidence type="ECO:0000312" key="8">
    <source>
        <dbReference type="EMBL" id="CAB87910.1"/>
    </source>
</evidence>
<name>SIA2_ARATH</name>